<reference key="1">
    <citation type="journal article" date="2007" name="PLoS ONE">
        <title>The complete genome sequence and analysis of the Epsilonproteobacterium Arcobacter butzleri.</title>
        <authorList>
            <person name="Miller W.G."/>
            <person name="Parker C.T."/>
            <person name="Rubenfield M."/>
            <person name="Mendz G.L."/>
            <person name="Woesten M.M.S.M."/>
            <person name="Ussery D.W."/>
            <person name="Stolz J.F."/>
            <person name="Binnewies T.T."/>
            <person name="Hallin P.F."/>
            <person name="Wang G."/>
            <person name="Malek J.A."/>
            <person name="Rogosin A."/>
            <person name="Stanker L.H."/>
            <person name="Mandrell R.E."/>
        </authorList>
    </citation>
    <scope>NUCLEOTIDE SEQUENCE [LARGE SCALE GENOMIC DNA]</scope>
    <source>
        <strain>RM4018</strain>
    </source>
</reference>
<organism>
    <name type="scientific">Aliarcobacter butzleri (strain RM4018)</name>
    <name type="common">Arcobacter butzleri</name>
    <dbReference type="NCBI Taxonomy" id="367737"/>
    <lineage>
        <taxon>Bacteria</taxon>
        <taxon>Pseudomonadati</taxon>
        <taxon>Campylobacterota</taxon>
        <taxon>Epsilonproteobacteria</taxon>
        <taxon>Campylobacterales</taxon>
        <taxon>Arcobacteraceae</taxon>
        <taxon>Aliarcobacter</taxon>
    </lineage>
</organism>
<comment type="function">
    <text evidence="1">Involved in the biosynthesis of lipid A, a phosphorylated glycolipid that anchors the lipopolysaccharide to the outer membrane of the cell.</text>
</comment>
<comment type="catalytic activity">
    <reaction evidence="1">
        <text>a (3R)-hydroxyacyl-[ACP] + UDP-N-acetyl-alpha-D-glucosamine = a UDP-3-O-[(3R)-3-hydroxyacyl]-N-acetyl-alpha-D-glucosamine + holo-[ACP]</text>
        <dbReference type="Rhea" id="RHEA:67812"/>
        <dbReference type="Rhea" id="RHEA-COMP:9685"/>
        <dbReference type="Rhea" id="RHEA-COMP:9945"/>
        <dbReference type="ChEBI" id="CHEBI:57705"/>
        <dbReference type="ChEBI" id="CHEBI:64479"/>
        <dbReference type="ChEBI" id="CHEBI:78827"/>
        <dbReference type="ChEBI" id="CHEBI:173225"/>
        <dbReference type="EC" id="2.3.1.129"/>
    </reaction>
</comment>
<comment type="pathway">
    <text evidence="1">Glycolipid biosynthesis; lipid IV(A) biosynthesis; lipid IV(A) from (3R)-3-hydroxytetradecanoyl-[acyl-carrier-protein] and UDP-N-acetyl-alpha-D-glucosamine: step 1/6.</text>
</comment>
<comment type="subunit">
    <text evidence="1">Homotrimer.</text>
</comment>
<comment type="subcellular location">
    <subcellularLocation>
        <location evidence="1">Cytoplasm</location>
    </subcellularLocation>
</comment>
<comment type="similarity">
    <text evidence="1">Belongs to the transferase hexapeptide repeat family. LpxA subfamily.</text>
</comment>
<dbReference type="EC" id="2.3.1.129" evidence="1"/>
<dbReference type="EMBL" id="CP000361">
    <property type="protein sequence ID" value="ABV68428.1"/>
    <property type="molecule type" value="Genomic_DNA"/>
</dbReference>
<dbReference type="RefSeq" id="WP_012148064.1">
    <property type="nucleotide sequence ID" value="NC_009850.1"/>
</dbReference>
<dbReference type="SMR" id="A8EWV5"/>
<dbReference type="STRING" id="367737.Abu_2215"/>
<dbReference type="GeneID" id="24304964"/>
<dbReference type="KEGG" id="abu:Abu_2215"/>
<dbReference type="eggNOG" id="COG1043">
    <property type="taxonomic scope" value="Bacteria"/>
</dbReference>
<dbReference type="HOGENOM" id="CLU_061249_0_0_7"/>
<dbReference type="UniPathway" id="UPA00359">
    <property type="reaction ID" value="UER00477"/>
</dbReference>
<dbReference type="Proteomes" id="UP000001136">
    <property type="component" value="Chromosome"/>
</dbReference>
<dbReference type="GO" id="GO:0005737">
    <property type="term" value="C:cytoplasm"/>
    <property type="evidence" value="ECO:0007669"/>
    <property type="project" value="UniProtKB-SubCell"/>
</dbReference>
<dbReference type="GO" id="GO:0016020">
    <property type="term" value="C:membrane"/>
    <property type="evidence" value="ECO:0007669"/>
    <property type="project" value="GOC"/>
</dbReference>
<dbReference type="GO" id="GO:0008780">
    <property type="term" value="F:acyl-[acyl-carrier-protein]-UDP-N-acetylglucosamine O-acyltransferase activity"/>
    <property type="evidence" value="ECO:0007669"/>
    <property type="project" value="UniProtKB-UniRule"/>
</dbReference>
<dbReference type="GO" id="GO:0009245">
    <property type="term" value="P:lipid A biosynthetic process"/>
    <property type="evidence" value="ECO:0007669"/>
    <property type="project" value="UniProtKB-UniRule"/>
</dbReference>
<dbReference type="CDD" id="cd03351">
    <property type="entry name" value="LbH_UDP-GlcNAc_AT"/>
    <property type="match status" value="1"/>
</dbReference>
<dbReference type="Gene3D" id="2.160.10.10">
    <property type="entry name" value="Hexapeptide repeat proteins"/>
    <property type="match status" value="1"/>
</dbReference>
<dbReference type="Gene3D" id="1.20.1180.10">
    <property type="entry name" value="Udp N-acetylglucosamine O-acyltransferase, C-terminal domain"/>
    <property type="match status" value="1"/>
</dbReference>
<dbReference type="HAMAP" id="MF_00387">
    <property type="entry name" value="LpxA"/>
    <property type="match status" value="1"/>
</dbReference>
<dbReference type="InterPro" id="IPR029098">
    <property type="entry name" value="Acetyltransf_C"/>
</dbReference>
<dbReference type="InterPro" id="IPR037157">
    <property type="entry name" value="Acetyltransf_C_sf"/>
</dbReference>
<dbReference type="InterPro" id="IPR001451">
    <property type="entry name" value="Hexapep"/>
</dbReference>
<dbReference type="InterPro" id="IPR018357">
    <property type="entry name" value="Hexapep_transf_CS"/>
</dbReference>
<dbReference type="InterPro" id="IPR010137">
    <property type="entry name" value="Lipid_A_LpxA"/>
</dbReference>
<dbReference type="InterPro" id="IPR011004">
    <property type="entry name" value="Trimer_LpxA-like_sf"/>
</dbReference>
<dbReference type="NCBIfam" id="TIGR01852">
    <property type="entry name" value="lipid_A_lpxA"/>
    <property type="match status" value="1"/>
</dbReference>
<dbReference type="NCBIfam" id="NF003657">
    <property type="entry name" value="PRK05289.1"/>
    <property type="match status" value="1"/>
</dbReference>
<dbReference type="PANTHER" id="PTHR43480">
    <property type="entry name" value="ACYL-[ACYL-CARRIER-PROTEIN]--UDP-N-ACETYLGLUCOSAMINE O-ACYLTRANSFERASE"/>
    <property type="match status" value="1"/>
</dbReference>
<dbReference type="PANTHER" id="PTHR43480:SF1">
    <property type="entry name" value="ACYL-[ACYL-CARRIER-PROTEIN]--UDP-N-ACETYLGLUCOSAMINE O-ACYLTRANSFERASE, MITOCHONDRIAL-RELATED"/>
    <property type="match status" value="1"/>
</dbReference>
<dbReference type="Pfam" id="PF13720">
    <property type="entry name" value="Acetyltransf_11"/>
    <property type="match status" value="1"/>
</dbReference>
<dbReference type="Pfam" id="PF00132">
    <property type="entry name" value="Hexapep"/>
    <property type="match status" value="1"/>
</dbReference>
<dbReference type="PIRSF" id="PIRSF000456">
    <property type="entry name" value="UDP-GlcNAc_acltr"/>
    <property type="match status" value="1"/>
</dbReference>
<dbReference type="SUPFAM" id="SSF51161">
    <property type="entry name" value="Trimeric LpxA-like enzymes"/>
    <property type="match status" value="1"/>
</dbReference>
<dbReference type="PROSITE" id="PS00101">
    <property type="entry name" value="HEXAPEP_TRANSFERASES"/>
    <property type="match status" value="1"/>
</dbReference>
<name>LPXA_ALIB4</name>
<sequence>MNNIHKTAIIEEGAILGDNITIGAFTIIGKNVKIGDGTIIDSHTLIDGKTTIGKNNHIFSHASIGTIPQDLKFNGEDVELIIGDNNKIREYTLFNPGTIGGGSVTKIGSNNLFMGYVHVAHDCIIGDNCIFANGATLAGHVECDDFVVVGGLTPIHQFCKIGTQVMIGGASAVAQDIPPFCLAEGNKAVLRGLNLTGLRRRFDNREDIDAIKHAYRELFEVGKPLQDVARELLDNDKNKYVKELASFVLNTKRGIPFNRK</sequence>
<evidence type="ECO:0000255" key="1">
    <source>
        <dbReference type="HAMAP-Rule" id="MF_00387"/>
    </source>
</evidence>
<keyword id="KW-0012">Acyltransferase</keyword>
<keyword id="KW-0963">Cytoplasm</keyword>
<keyword id="KW-0441">Lipid A biosynthesis</keyword>
<keyword id="KW-0444">Lipid biosynthesis</keyword>
<keyword id="KW-0443">Lipid metabolism</keyword>
<keyword id="KW-1185">Reference proteome</keyword>
<keyword id="KW-0677">Repeat</keyword>
<keyword id="KW-0808">Transferase</keyword>
<proteinExistence type="inferred from homology"/>
<accession>A8EWV5</accession>
<feature type="chain" id="PRO_1000060731" description="Acyl-[acyl-carrier-protein]--UDP-N-acetylglucosamine O-acyltransferase">
    <location>
        <begin position="1"/>
        <end position="260"/>
    </location>
</feature>
<protein>
    <recommendedName>
        <fullName evidence="1">Acyl-[acyl-carrier-protein]--UDP-N-acetylglucosamine O-acyltransferase</fullName>
        <shortName evidence="1">UDP-N-acetylglucosamine acyltransferase</shortName>
        <ecNumber evidence="1">2.3.1.129</ecNumber>
    </recommendedName>
</protein>
<gene>
    <name evidence="1" type="primary">lpxA</name>
    <name type="ordered locus">Abu_2215</name>
</gene>